<feature type="chain" id="PRO_1000049050" description="Large ribosomal subunit protein bL20">
    <location>
        <begin position="1"/>
        <end position="119"/>
    </location>
</feature>
<name>RL20_RHOPS</name>
<dbReference type="EMBL" id="CP000283">
    <property type="protein sequence ID" value="ABE37405.1"/>
    <property type="molecule type" value="Genomic_DNA"/>
</dbReference>
<dbReference type="SMR" id="Q13ET4"/>
<dbReference type="STRING" id="316057.RPD_0165"/>
<dbReference type="KEGG" id="rpd:RPD_0165"/>
<dbReference type="eggNOG" id="COG0292">
    <property type="taxonomic scope" value="Bacteria"/>
</dbReference>
<dbReference type="HOGENOM" id="CLU_123265_0_1_5"/>
<dbReference type="BioCyc" id="RPAL316057:RPD_RS00830-MONOMER"/>
<dbReference type="Proteomes" id="UP000001818">
    <property type="component" value="Chromosome"/>
</dbReference>
<dbReference type="GO" id="GO:1990904">
    <property type="term" value="C:ribonucleoprotein complex"/>
    <property type="evidence" value="ECO:0007669"/>
    <property type="project" value="UniProtKB-KW"/>
</dbReference>
<dbReference type="GO" id="GO:0005840">
    <property type="term" value="C:ribosome"/>
    <property type="evidence" value="ECO:0007669"/>
    <property type="project" value="UniProtKB-KW"/>
</dbReference>
<dbReference type="GO" id="GO:0019843">
    <property type="term" value="F:rRNA binding"/>
    <property type="evidence" value="ECO:0007669"/>
    <property type="project" value="UniProtKB-UniRule"/>
</dbReference>
<dbReference type="GO" id="GO:0003735">
    <property type="term" value="F:structural constituent of ribosome"/>
    <property type="evidence" value="ECO:0007669"/>
    <property type="project" value="InterPro"/>
</dbReference>
<dbReference type="GO" id="GO:0000027">
    <property type="term" value="P:ribosomal large subunit assembly"/>
    <property type="evidence" value="ECO:0007669"/>
    <property type="project" value="UniProtKB-UniRule"/>
</dbReference>
<dbReference type="GO" id="GO:0006412">
    <property type="term" value="P:translation"/>
    <property type="evidence" value="ECO:0007669"/>
    <property type="project" value="InterPro"/>
</dbReference>
<dbReference type="CDD" id="cd07026">
    <property type="entry name" value="Ribosomal_L20"/>
    <property type="match status" value="1"/>
</dbReference>
<dbReference type="FunFam" id="1.10.1900.20:FF:000001">
    <property type="entry name" value="50S ribosomal protein L20"/>
    <property type="match status" value="1"/>
</dbReference>
<dbReference type="Gene3D" id="6.10.160.10">
    <property type="match status" value="1"/>
</dbReference>
<dbReference type="Gene3D" id="1.10.1900.20">
    <property type="entry name" value="Ribosomal protein L20"/>
    <property type="match status" value="1"/>
</dbReference>
<dbReference type="HAMAP" id="MF_00382">
    <property type="entry name" value="Ribosomal_bL20"/>
    <property type="match status" value="1"/>
</dbReference>
<dbReference type="InterPro" id="IPR005813">
    <property type="entry name" value="Ribosomal_bL20"/>
</dbReference>
<dbReference type="InterPro" id="IPR049946">
    <property type="entry name" value="RIBOSOMAL_L20_CS"/>
</dbReference>
<dbReference type="InterPro" id="IPR035566">
    <property type="entry name" value="Ribosomal_protein_bL20_C"/>
</dbReference>
<dbReference type="NCBIfam" id="TIGR01032">
    <property type="entry name" value="rplT_bact"/>
    <property type="match status" value="1"/>
</dbReference>
<dbReference type="PANTHER" id="PTHR10986">
    <property type="entry name" value="39S RIBOSOMAL PROTEIN L20"/>
    <property type="match status" value="1"/>
</dbReference>
<dbReference type="Pfam" id="PF00453">
    <property type="entry name" value="Ribosomal_L20"/>
    <property type="match status" value="1"/>
</dbReference>
<dbReference type="PRINTS" id="PR00062">
    <property type="entry name" value="RIBOSOMALL20"/>
</dbReference>
<dbReference type="SUPFAM" id="SSF74731">
    <property type="entry name" value="Ribosomal protein L20"/>
    <property type="match status" value="1"/>
</dbReference>
<dbReference type="PROSITE" id="PS00937">
    <property type="entry name" value="RIBOSOMAL_L20"/>
    <property type="match status" value="1"/>
</dbReference>
<comment type="function">
    <text evidence="1">Binds directly to 23S ribosomal RNA and is necessary for the in vitro assembly process of the 50S ribosomal subunit. It is not involved in the protein synthesizing functions of that subunit.</text>
</comment>
<comment type="similarity">
    <text evidence="1">Belongs to the bacterial ribosomal protein bL20 family.</text>
</comment>
<reference key="1">
    <citation type="submission" date="2006-03" db="EMBL/GenBank/DDBJ databases">
        <title>Complete sequence of Rhodopseudomonas palustris BisB5.</title>
        <authorList>
            <consortium name="US DOE Joint Genome Institute"/>
            <person name="Copeland A."/>
            <person name="Lucas S."/>
            <person name="Lapidus A."/>
            <person name="Barry K."/>
            <person name="Detter J.C."/>
            <person name="Glavina del Rio T."/>
            <person name="Hammon N."/>
            <person name="Israni S."/>
            <person name="Dalin E."/>
            <person name="Tice H."/>
            <person name="Pitluck S."/>
            <person name="Chain P."/>
            <person name="Malfatti S."/>
            <person name="Shin M."/>
            <person name="Vergez L."/>
            <person name="Schmutz J."/>
            <person name="Larimer F."/>
            <person name="Land M."/>
            <person name="Hauser L."/>
            <person name="Pelletier D.A."/>
            <person name="Kyrpides N."/>
            <person name="Lykidis A."/>
            <person name="Oda Y."/>
            <person name="Harwood C.S."/>
            <person name="Richardson P."/>
        </authorList>
    </citation>
    <scope>NUCLEOTIDE SEQUENCE [LARGE SCALE GENOMIC DNA]</scope>
    <source>
        <strain>BisB5</strain>
    </source>
</reference>
<gene>
    <name evidence="1" type="primary">rplT</name>
    <name type="ordered locus">RPD_0165</name>
</gene>
<keyword id="KW-0687">Ribonucleoprotein</keyword>
<keyword id="KW-0689">Ribosomal protein</keyword>
<keyword id="KW-0694">RNA-binding</keyword>
<keyword id="KW-0699">rRNA-binding</keyword>
<evidence type="ECO:0000255" key="1">
    <source>
        <dbReference type="HAMAP-Rule" id="MF_00382"/>
    </source>
</evidence>
<evidence type="ECO:0000305" key="2"/>
<protein>
    <recommendedName>
        <fullName evidence="1">Large ribosomal subunit protein bL20</fullName>
    </recommendedName>
    <alternativeName>
        <fullName evidence="2">50S ribosomal protein L20</fullName>
    </alternativeName>
</protein>
<sequence length="119" mass="13192">MARVKRGVTAHAKHKKVYKLAKGFRGRRKNTIRAAKAAVDKAGQYAFRDRKRKKRTFRALWIQRINAAVRPLGMTYSVFINGLAKSGVIVDRKVLSDLAITEPAAFQAIAEKAKAALAA</sequence>
<accession>Q13ET4</accession>
<proteinExistence type="inferred from homology"/>
<organism>
    <name type="scientific">Rhodopseudomonas palustris (strain BisB5)</name>
    <dbReference type="NCBI Taxonomy" id="316057"/>
    <lineage>
        <taxon>Bacteria</taxon>
        <taxon>Pseudomonadati</taxon>
        <taxon>Pseudomonadota</taxon>
        <taxon>Alphaproteobacteria</taxon>
        <taxon>Hyphomicrobiales</taxon>
        <taxon>Nitrobacteraceae</taxon>
        <taxon>Rhodopseudomonas</taxon>
    </lineage>
</organism>